<reference key="1">
    <citation type="submission" date="2002-09" db="EMBL/GenBank/DDBJ databases">
        <title>Expression of cellular apoptosis susceptibility protein in non-specific cytotoxic cells.</title>
        <authorList>
            <person name="Praveen K."/>
            <person name="Leary J.H. III"/>
            <person name="Evans D.L."/>
            <person name="Jaso-Friedmann L."/>
        </authorList>
    </citation>
    <scope>NUCLEOTIDE SEQUENCE [MRNA]</scope>
</reference>
<feature type="chain" id="PRO_0000237681" description="Exportin-2">
    <location>
        <begin position="1"/>
        <end position="971"/>
    </location>
</feature>
<feature type="domain" description="Importin N-terminal" evidence="3">
    <location>
        <begin position="29"/>
        <end position="102"/>
    </location>
</feature>
<evidence type="ECO:0000250" key="1">
    <source>
        <dbReference type="UniProtKB" id="P55060"/>
    </source>
</evidence>
<evidence type="ECO:0000250" key="2">
    <source>
        <dbReference type="UniProtKB" id="Q7SZC2"/>
    </source>
</evidence>
<evidence type="ECO:0000255" key="3">
    <source>
        <dbReference type="PROSITE-ProRule" id="PRU00115"/>
    </source>
</evidence>
<evidence type="ECO:0000305" key="4"/>
<organism>
    <name type="scientific">Oreochromis niloticus</name>
    <name type="common">Nile tilapia</name>
    <name type="synonym">Tilapia nilotica</name>
    <dbReference type="NCBI Taxonomy" id="8128"/>
    <lineage>
        <taxon>Eukaryota</taxon>
        <taxon>Metazoa</taxon>
        <taxon>Chordata</taxon>
        <taxon>Craniata</taxon>
        <taxon>Vertebrata</taxon>
        <taxon>Euteleostomi</taxon>
        <taxon>Actinopterygii</taxon>
        <taxon>Neopterygii</taxon>
        <taxon>Teleostei</taxon>
        <taxon>Neoteleostei</taxon>
        <taxon>Acanthomorphata</taxon>
        <taxon>Ovalentaria</taxon>
        <taxon>Cichlomorphae</taxon>
        <taxon>Cichliformes</taxon>
        <taxon>Cichlidae</taxon>
        <taxon>African cichlids</taxon>
        <taxon>Pseudocrenilabrinae</taxon>
        <taxon>Oreochromini</taxon>
        <taxon>Oreochromis</taxon>
    </lineage>
</organism>
<accession>Q8AY73</accession>
<comment type="function">
    <text evidence="1 2">Export receptor for importin alpha. Mediates importin-alpha re-export from the nucleus to the cytoplasm after import substrates have been released into the nucleoplasm (By similarity). Negatively regulates fluid secretion and plays a role in fluid homeostasis by down-regulating cftr activity (By similarity).</text>
</comment>
<comment type="subunit">
    <text evidence="2">Interacts with cftr.</text>
</comment>
<comment type="subcellular location">
    <subcellularLocation>
        <location evidence="1">Cytoplasm</location>
    </subcellularLocation>
    <subcellularLocation>
        <location evidence="1">Nucleus</location>
    </subcellularLocation>
    <text evidence="1">Shuttles between the nucleus and the cytoplasm.</text>
</comment>
<comment type="similarity">
    <text evidence="4">Belongs to the XPO2/CSE1 family.</text>
</comment>
<name>XPO2_ORENI</name>
<gene>
    <name type="primary">cse1l</name>
    <name type="synonym">cas</name>
    <name type="synonym">xpo2</name>
</gene>
<sequence>MELNDANLQTLTEFLRKTLDPDPTVRRPAEKFLESVEGNQNYPLLLLTLLEKSQDNVIRVCAAVTFKNYIKRNWRIVEDEPNKISDPDRTAVKANIVNLMLSSPEQIQKQLSDAISIIGREDFPQKWPDLLTEMVARFRSGDFHIINGVLRTAHSLFKRYRHEFKSNELWSEIKLVLDTFALPLTELFKATIELCQTHATDVNALKVLFSSLTLIAKLFYSLNFQDLPEFFEDNMETWMTNFHGLLTLDNKLLQTDDEEEAGLLELLKSQICDNAALYAQKYDEEFQPYLPRFVTAIWNLLVSTGQEVKYDLLVSNAIQFLASVCERPHYKHLFEDQNTLTSICEKVIVPNMEFRSADEEAFEDNSEEYIRRDLEGSDIDTRRRAACDLVRGLCKFFEGPVTAIFSGYVNSMLSEYAKNPRENWKHKDAAIYLVTSLASKAQTQKHGITQANELVNLTEFFVNHILPDLKSPNVNEFPVLKADAIKYVMIFRSQLPKEQLLQAVPLLITHLQAESTVEHTYAAHALERLFTMRGPNNATLITAAEMAPFTEQLLNNLFKALAFPGSAENEYIMKAIMRSFSLLQESIVPYIPTLIGQLTHKLLQVSKNPSKPHFNHYLFESLCLSVRITCKANPTTVSSFEEALFPVFTEILQNDVQEFLPYVFQVMSLLLEIHSNSIPASYMALFPHLLQPVLWERTGNIPPLVRLLQAYLEKGGETIARSAADKIPGLLGVFQKLIASKANDHQGFYLLNSIIEHMPPESLTQYRKQIFILLFQRLQSSKTTKFIKSFLVFVNLYCVKYGAIALQEIFDSIQPKMFGMVLEKIVIPEVQKVSGPVEKKICAVGITKVLTECPAMMDTEYTKLWTPLLQALIGLFELPEDDSIPDDEHFIDIEDTPGYQTAFSQLAFAGKKEHDPIGDAVGNPKILLAQSLHKLSTACPGRVPSMLSTSLNAEALQFLQGYLQAATVQLV</sequence>
<protein>
    <recommendedName>
        <fullName>Exportin-2</fullName>
        <shortName>Exp2</shortName>
    </recommendedName>
    <alternativeName>
        <fullName>Cellular apoptosis susceptibility protein</fullName>
    </alternativeName>
    <alternativeName>
        <fullName>Chromosome segregation 1-like protein</fullName>
    </alternativeName>
    <alternativeName>
        <fullName>Importin-alpha re-exporter</fullName>
    </alternativeName>
</protein>
<dbReference type="EMBL" id="AF547173">
    <property type="protein sequence ID" value="AAN52370.1"/>
    <property type="molecule type" value="mRNA"/>
</dbReference>
<dbReference type="RefSeq" id="NP_001266624.1">
    <property type="nucleotide sequence ID" value="NM_001279695.1"/>
</dbReference>
<dbReference type="SMR" id="Q8AY73"/>
<dbReference type="FunCoup" id="Q8AY73">
    <property type="interactions" value="2097"/>
</dbReference>
<dbReference type="STRING" id="8128.ENSONIP00000068350"/>
<dbReference type="Ensembl" id="ENSONIT00000051732.1">
    <property type="protein sequence ID" value="ENSONIP00000030576.1"/>
    <property type="gene ID" value="ENSONIG00000018970.2"/>
</dbReference>
<dbReference type="GeneID" id="100534474"/>
<dbReference type="KEGG" id="onl:100534474"/>
<dbReference type="CTD" id="1434"/>
<dbReference type="eggNOG" id="KOG1992">
    <property type="taxonomic scope" value="Eukaryota"/>
</dbReference>
<dbReference type="GeneTree" id="ENSGT00550000074884"/>
<dbReference type="HOGENOM" id="CLU_009614_0_0_1"/>
<dbReference type="InParanoid" id="Q8AY73"/>
<dbReference type="OrthoDB" id="3268246at2759"/>
<dbReference type="Proteomes" id="UP000005207">
    <property type="component" value="Linkage group LG5"/>
</dbReference>
<dbReference type="GO" id="GO:0005829">
    <property type="term" value="C:cytosol"/>
    <property type="evidence" value="ECO:0007669"/>
    <property type="project" value="TreeGrafter"/>
</dbReference>
<dbReference type="GO" id="GO:0005635">
    <property type="term" value="C:nuclear envelope"/>
    <property type="evidence" value="ECO:0007669"/>
    <property type="project" value="TreeGrafter"/>
</dbReference>
<dbReference type="GO" id="GO:0005049">
    <property type="term" value="F:nuclear export signal receptor activity"/>
    <property type="evidence" value="ECO:0007669"/>
    <property type="project" value="TreeGrafter"/>
</dbReference>
<dbReference type="GO" id="GO:0031267">
    <property type="term" value="F:small GTPase binding"/>
    <property type="evidence" value="ECO:0007669"/>
    <property type="project" value="InterPro"/>
</dbReference>
<dbReference type="GO" id="GO:0006611">
    <property type="term" value="P:protein export from nucleus"/>
    <property type="evidence" value="ECO:0007669"/>
    <property type="project" value="TreeGrafter"/>
</dbReference>
<dbReference type="GO" id="GO:0006606">
    <property type="term" value="P:protein import into nucleus"/>
    <property type="evidence" value="ECO:0007669"/>
    <property type="project" value="TreeGrafter"/>
</dbReference>
<dbReference type="FunFam" id="1.25.10.10:FF:000057">
    <property type="entry name" value="Exportin-2 isoform 1"/>
    <property type="match status" value="1"/>
</dbReference>
<dbReference type="Gene3D" id="1.25.10.10">
    <property type="entry name" value="Leucine-rich Repeat Variant"/>
    <property type="match status" value="1"/>
</dbReference>
<dbReference type="InterPro" id="IPR011989">
    <property type="entry name" value="ARM-like"/>
</dbReference>
<dbReference type="InterPro" id="IPR016024">
    <property type="entry name" value="ARM-type_fold"/>
</dbReference>
<dbReference type="InterPro" id="IPR001494">
    <property type="entry name" value="Importin-beta_N"/>
</dbReference>
<dbReference type="InterPro" id="IPR005043">
    <property type="entry name" value="XPO2_C"/>
</dbReference>
<dbReference type="InterPro" id="IPR013713">
    <property type="entry name" value="XPO2_central"/>
</dbReference>
<dbReference type="PANTHER" id="PTHR10997:SF8">
    <property type="entry name" value="EXPORTIN-2"/>
    <property type="match status" value="1"/>
</dbReference>
<dbReference type="PANTHER" id="PTHR10997">
    <property type="entry name" value="IMPORTIN-7, 8, 11"/>
    <property type="match status" value="1"/>
</dbReference>
<dbReference type="Pfam" id="PF03378">
    <property type="entry name" value="CAS_CSE1"/>
    <property type="match status" value="1"/>
</dbReference>
<dbReference type="Pfam" id="PF08506">
    <property type="entry name" value="Cse1"/>
    <property type="match status" value="1"/>
</dbReference>
<dbReference type="Pfam" id="PF03810">
    <property type="entry name" value="IBN_N"/>
    <property type="match status" value="1"/>
</dbReference>
<dbReference type="SMART" id="SM00913">
    <property type="entry name" value="IBN_N"/>
    <property type="match status" value="1"/>
</dbReference>
<dbReference type="SUPFAM" id="SSF48371">
    <property type="entry name" value="ARM repeat"/>
    <property type="match status" value="1"/>
</dbReference>
<dbReference type="PROSITE" id="PS50166">
    <property type="entry name" value="IMPORTIN_B_NT"/>
    <property type="match status" value="1"/>
</dbReference>
<proteinExistence type="evidence at transcript level"/>
<keyword id="KW-0963">Cytoplasm</keyword>
<keyword id="KW-0539">Nucleus</keyword>
<keyword id="KW-0653">Protein transport</keyword>
<keyword id="KW-1185">Reference proteome</keyword>
<keyword id="KW-0813">Transport</keyword>